<name>SYGB_LACCB</name>
<organism>
    <name type="scientific">Lacticaseibacillus casei (strain BL23)</name>
    <name type="common">Lactobacillus casei</name>
    <dbReference type="NCBI Taxonomy" id="543734"/>
    <lineage>
        <taxon>Bacteria</taxon>
        <taxon>Bacillati</taxon>
        <taxon>Bacillota</taxon>
        <taxon>Bacilli</taxon>
        <taxon>Lactobacillales</taxon>
        <taxon>Lactobacillaceae</taxon>
        <taxon>Lacticaseibacillus</taxon>
    </lineage>
</organism>
<evidence type="ECO:0000255" key="1">
    <source>
        <dbReference type="HAMAP-Rule" id="MF_00255"/>
    </source>
</evidence>
<sequence>MTHQYLIEIGLEDMPAHVVTPSLQQFHDKTVAFLKENHLDHGAIDQYATPRRLALLIHDLADKQADVEEDVKGPAKKIAQDADGNWTKAAIGFSRGQGMTPDDIVFKTIKGVDYVYLHKAIKGKTAAAILPGMLDVIKSLTFPTRMKWGAYDFEYIRPIHWLVSLLDDAIVPMKLLDVDAGRTTQGHRFLGRPVTLGNAADYVAALKAQFVIVEPAARKQLISDQIHQIAADHQWQIDLDADLLEEVNNLVEWPTAFAGNFDEKYLKIPEAVLITSMKDNQRYFYARDASGKMVNAFIGVRNGNADHLANVIAGNEKVLTARLEDAAFFYAEDQKRSIADDVDRLKAVSFHDKISSMYDKMARTRVIADLLADRFGLSATDKADLDRAASIYKFDLVTSMVGEFPELQGIMGEHYAQLAGEKPAVAQAIAEHYEPISADGALPESLVGTVLAIADKFDSLMSFFAVDLIPSGSNDPYALRRQAYGIVRMIAKHDWPFAVAELQTTIADALKAAGKTNNLDFAAHQQDLNAFMIDRAKQVLQGQKIRHDIVDAVTVRADADLAGILDAAKILSAHADDTDFKPVMEALGRVLRITKKQQVKVDVDTAKFENPSEGQLYDATVATAKKFDDEPTEADYQALKALADPINAYFDATMVMADDQAIRQNRLAALLQLAALIKQFGDVSQVIVK</sequence>
<accession>B3WEK6</accession>
<proteinExistence type="inferred from homology"/>
<keyword id="KW-0030">Aminoacyl-tRNA synthetase</keyword>
<keyword id="KW-0067">ATP-binding</keyword>
<keyword id="KW-0963">Cytoplasm</keyword>
<keyword id="KW-0436">Ligase</keyword>
<keyword id="KW-0547">Nucleotide-binding</keyword>
<keyword id="KW-0648">Protein biosynthesis</keyword>
<gene>
    <name evidence="1" type="primary">glyS</name>
    <name type="ordered locus">LCABL_17260</name>
</gene>
<comment type="catalytic activity">
    <reaction evidence="1">
        <text>tRNA(Gly) + glycine + ATP = glycyl-tRNA(Gly) + AMP + diphosphate</text>
        <dbReference type="Rhea" id="RHEA:16013"/>
        <dbReference type="Rhea" id="RHEA-COMP:9664"/>
        <dbReference type="Rhea" id="RHEA-COMP:9683"/>
        <dbReference type="ChEBI" id="CHEBI:30616"/>
        <dbReference type="ChEBI" id="CHEBI:33019"/>
        <dbReference type="ChEBI" id="CHEBI:57305"/>
        <dbReference type="ChEBI" id="CHEBI:78442"/>
        <dbReference type="ChEBI" id="CHEBI:78522"/>
        <dbReference type="ChEBI" id="CHEBI:456215"/>
        <dbReference type="EC" id="6.1.1.14"/>
    </reaction>
</comment>
<comment type="subunit">
    <text evidence="1">Tetramer of two alpha and two beta subunits.</text>
</comment>
<comment type="subcellular location">
    <subcellularLocation>
        <location evidence="1">Cytoplasm</location>
    </subcellularLocation>
</comment>
<comment type="similarity">
    <text evidence="1">Belongs to the class-II aminoacyl-tRNA synthetase family.</text>
</comment>
<dbReference type="EC" id="6.1.1.14" evidence="1"/>
<dbReference type="EMBL" id="FM177140">
    <property type="protein sequence ID" value="CAQ66807.1"/>
    <property type="molecule type" value="Genomic_DNA"/>
</dbReference>
<dbReference type="SMR" id="B3WEK6"/>
<dbReference type="KEGG" id="lcb:LCABL_17260"/>
<dbReference type="HOGENOM" id="CLU_007220_2_2_9"/>
<dbReference type="GO" id="GO:0005829">
    <property type="term" value="C:cytosol"/>
    <property type="evidence" value="ECO:0007669"/>
    <property type="project" value="TreeGrafter"/>
</dbReference>
<dbReference type="GO" id="GO:0005524">
    <property type="term" value="F:ATP binding"/>
    <property type="evidence" value="ECO:0007669"/>
    <property type="project" value="UniProtKB-UniRule"/>
</dbReference>
<dbReference type="GO" id="GO:0004820">
    <property type="term" value="F:glycine-tRNA ligase activity"/>
    <property type="evidence" value="ECO:0007669"/>
    <property type="project" value="UniProtKB-UniRule"/>
</dbReference>
<dbReference type="GO" id="GO:0006426">
    <property type="term" value="P:glycyl-tRNA aminoacylation"/>
    <property type="evidence" value="ECO:0007669"/>
    <property type="project" value="UniProtKB-UniRule"/>
</dbReference>
<dbReference type="HAMAP" id="MF_00255">
    <property type="entry name" value="Gly_tRNA_synth_beta"/>
    <property type="match status" value="1"/>
</dbReference>
<dbReference type="InterPro" id="IPR015944">
    <property type="entry name" value="Gly-tRNA-synth_bsu"/>
</dbReference>
<dbReference type="InterPro" id="IPR006194">
    <property type="entry name" value="Gly-tRNA-synth_heterodimer"/>
</dbReference>
<dbReference type="NCBIfam" id="TIGR00211">
    <property type="entry name" value="glyS"/>
    <property type="match status" value="1"/>
</dbReference>
<dbReference type="PANTHER" id="PTHR30075:SF2">
    <property type="entry name" value="GLYCINE--TRNA LIGASE, CHLOROPLASTIC_MITOCHONDRIAL 2"/>
    <property type="match status" value="1"/>
</dbReference>
<dbReference type="PANTHER" id="PTHR30075">
    <property type="entry name" value="GLYCYL-TRNA SYNTHETASE"/>
    <property type="match status" value="1"/>
</dbReference>
<dbReference type="Pfam" id="PF02092">
    <property type="entry name" value="tRNA_synt_2f"/>
    <property type="match status" value="1"/>
</dbReference>
<dbReference type="PRINTS" id="PR01045">
    <property type="entry name" value="TRNASYNTHGB"/>
</dbReference>
<dbReference type="SUPFAM" id="SSF109604">
    <property type="entry name" value="HD-domain/PDEase-like"/>
    <property type="match status" value="1"/>
</dbReference>
<dbReference type="PROSITE" id="PS50861">
    <property type="entry name" value="AA_TRNA_LIGASE_II_GLYAB"/>
    <property type="match status" value="1"/>
</dbReference>
<feature type="chain" id="PRO_1000101291" description="Glycine--tRNA ligase beta subunit">
    <location>
        <begin position="1"/>
        <end position="689"/>
    </location>
</feature>
<reference key="1">
    <citation type="submission" date="2008-06" db="EMBL/GenBank/DDBJ databases">
        <title>Lactobacillus casei BL23 complete genome sequence.</title>
        <authorList>
            <person name="Maze A."/>
            <person name="Boel G."/>
            <person name="Bourand A."/>
            <person name="Loux V."/>
            <person name="Gibrat J.F."/>
            <person name="Zuniga M."/>
            <person name="Hartke A."/>
            <person name="Deutscher J."/>
        </authorList>
    </citation>
    <scope>NUCLEOTIDE SEQUENCE [LARGE SCALE GENOMIC DNA]</scope>
    <source>
        <strain>BL23</strain>
    </source>
</reference>
<protein>
    <recommendedName>
        <fullName evidence="1">Glycine--tRNA ligase beta subunit</fullName>
        <ecNumber evidence="1">6.1.1.14</ecNumber>
    </recommendedName>
    <alternativeName>
        <fullName evidence="1">Glycyl-tRNA synthetase beta subunit</fullName>
        <shortName evidence="1">GlyRS</shortName>
    </alternativeName>
</protein>